<organism>
    <name type="scientific">Cupriavidus necator (strain ATCC 17699 / DSM 428 / KCTC 22496 / NCIMB 10442 / H16 / Stanier 337)</name>
    <name type="common">Ralstonia eutropha</name>
    <dbReference type="NCBI Taxonomy" id="381666"/>
    <lineage>
        <taxon>Bacteria</taxon>
        <taxon>Pseudomonadati</taxon>
        <taxon>Pseudomonadota</taxon>
        <taxon>Betaproteobacteria</taxon>
        <taxon>Burkholderiales</taxon>
        <taxon>Burkholderiaceae</taxon>
        <taxon>Cupriavidus</taxon>
    </lineage>
</organism>
<reference key="1">
    <citation type="journal article" date="2006" name="Nat. Biotechnol.">
        <title>Genome sequence of the bioplastic-producing 'Knallgas' bacterium Ralstonia eutropha H16.</title>
        <authorList>
            <person name="Pohlmann A."/>
            <person name="Fricke W.F."/>
            <person name="Reinecke F."/>
            <person name="Kusian B."/>
            <person name="Liesegang H."/>
            <person name="Cramm R."/>
            <person name="Eitinger T."/>
            <person name="Ewering C."/>
            <person name="Poetter M."/>
            <person name="Schwartz E."/>
            <person name="Strittmatter A."/>
            <person name="Voss I."/>
            <person name="Gottschalk G."/>
            <person name="Steinbuechel A."/>
            <person name="Friedrich B."/>
            <person name="Bowien B."/>
        </authorList>
    </citation>
    <scope>NUCLEOTIDE SEQUENCE [LARGE SCALE GENOMIC DNA]</scope>
    <source>
        <strain>ATCC 17699 / DSM 428 / KCTC 22496 / NCIMB 10442 / H16 / Stanier 337</strain>
    </source>
</reference>
<comment type="function">
    <text evidence="1">Transfers the 4'-phosphopantetheine moiety from coenzyme A to a Ser of acyl-carrier-protein.</text>
</comment>
<comment type="catalytic activity">
    <reaction evidence="1">
        <text>apo-[ACP] + CoA = holo-[ACP] + adenosine 3',5'-bisphosphate + H(+)</text>
        <dbReference type="Rhea" id="RHEA:12068"/>
        <dbReference type="Rhea" id="RHEA-COMP:9685"/>
        <dbReference type="Rhea" id="RHEA-COMP:9690"/>
        <dbReference type="ChEBI" id="CHEBI:15378"/>
        <dbReference type="ChEBI" id="CHEBI:29999"/>
        <dbReference type="ChEBI" id="CHEBI:57287"/>
        <dbReference type="ChEBI" id="CHEBI:58343"/>
        <dbReference type="ChEBI" id="CHEBI:64479"/>
        <dbReference type="EC" id="2.7.8.7"/>
    </reaction>
</comment>
<comment type="cofactor">
    <cofactor evidence="1">
        <name>Mg(2+)</name>
        <dbReference type="ChEBI" id="CHEBI:18420"/>
    </cofactor>
</comment>
<comment type="subcellular location">
    <subcellularLocation>
        <location evidence="1">Cytoplasm</location>
    </subcellularLocation>
</comment>
<comment type="similarity">
    <text evidence="1">Belongs to the P-Pant transferase superfamily. AcpS family.</text>
</comment>
<sequence>MIYGVGTDIIQIARVQGVMERTNGRFAEKVLGPDELAKYHARKARSEKRGLAFLSTRFAAKEAFSKAIGLGMRWPMTWRAMELMNLPSGEPTPICHGELAAWLAERGLSVRVSVSDEHDFAVAFAIAERAGGAASQPTAL</sequence>
<gene>
    <name evidence="1" type="primary">acpS</name>
    <name type="ordered locus">H16_A2551</name>
</gene>
<feature type="chain" id="PRO_1000008473" description="Holo-[acyl-carrier-protein] synthase">
    <location>
        <begin position="1"/>
        <end position="140"/>
    </location>
</feature>
<feature type="binding site" evidence="1">
    <location>
        <position position="8"/>
    </location>
    <ligand>
        <name>Mg(2+)</name>
        <dbReference type="ChEBI" id="CHEBI:18420"/>
    </ligand>
</feature>
<feature type="binding site" evidence="1">
    <location>
        <position position="62"/>
    </location>
    <ligand>
        <name>Mg(2+)</name>
        <dbReference type="ChEBI" id="CHEBI:18420"/>
    </ligand>
</feature>
<keyword id="KW-0963">Cytoplasm</keyword>
<keyword id="KW-0275">Fatty acid biosynthesis</keyword>
<keyword id="KW-0276">Fatty acid metabolism</keyword>
<keyword id="KW-0444">Lipid biosynthesis</keyword>
<keyword id="KW-0443">Lipid metabolism</keyword>
<keyword id="KW-0460">Magnesium</keyword>
<keyword id="KW-0479">Metal-binding</keyword>
<keyword id="KW-1185">Reference proteome</keyword>
<keyword id="KW-0808">Transferase</keyword>
<proteinExistence type="inferred from homology"/>
<name>ACPS_CUPNH</name>
<accession>Q0K8N7</accession>
<protein>
    <recommendedName>
        <fullName evidence="1">Holo-[acyl-carrier-protein] synthase</fullName>
        <shortName evidence="1">Holo-ACP synthase</shortName>
        <ecNumber evidence="1">2.7.8.7</ecNumber>
    </recommendedName>
    <alternativeName>
        <fullName evidence="1">4'-phosphopantetheinyl transferase AcpS</fullName>
    </alternativeName>
</protein>
<evidence type="ECO:0000255" key="1">
    <source>
        <dbReference type="HAMAP-Rule" id="MF_00101"/>
    </source>
</evidence>
<dbReference type="EC" id="2.7.8.7" evidence="1"/>
<dbReference type="EMBL" id="AM260479">
    <property type="protein sequence ID" value="CAJ93634.1"/>
    <property type="molecule type" value="Genomic_DNA"/>
</dbReference>
<dbReference type="RefSeq" id="WP_010814694.1">
    <property type="nucleotide sequence ID" value="NZ_CP039287.1"/>
</dbReference>
<dbReference type="SMR" id="Q0K8N7"/>
<dbReference type="STRING" id="381666.H16_A2551"/>
<dbReference type="KEGG" id="reh:H16_A2551"/>
<dbReference type="eggNOG" id="COG0736">
    <property type="taxonomic scope" value="Bacteria"/>
</dbReference>
<dbReference type="HOGENOM" id="CLU_089696_3_1_4"/>
<dbReference type="OrthoDB" id="517356at2"/>
<dbReference type="Proteomes" id="UP000008210">
    <property type="component" value="Chromosome 1"/>
</dbReference>
<dbReference type="GO" id="GO:0005737">
    <property type="term" value="C:cytoplasm"/>
    <property type="evidence" value="ECO:0007669"/>
    <property type="project" value="UniProtKB-SubCell"/>
</dbReference>
<dbReference type="GO" id="GO:0008897">
    <property type="term" value="F:holo-[acyl-carrier-protein] synthase activity"/>
    <property type="evidence" value="ECO:0007669"/>
    <property type="project" value="UniProtKB-UniRule"/>
</dbReference>
<dbReference type="GO" id="GO:0000287">
    <property type="term" value="F:magnesium ion binding"/>
    <property type="evidence" value="ECO:0007669"/>
    <property type="project" value="UniProtKB-UniRule"/>
</dbReference>
<dbReference type="GO" id="GO:0006633">
    <property type="term" value="P:fatty acid biosynthetic process"/>
    <property type="evidence" value="ECO:0007669"/>
    <property type="project" value="UniProtKB-UniRule"/>
</dbReference>
<dbReference type="Gene3D" id="3.90.470.20">
    <property type="entry name" value="4'-phosphopantetheinyl transferase domain"/>
    <property type="match status" value="1"/>
</dbReference>
<dbReference type="HAMAP" id="MF_00101">
    <property type="entry name" value="AcpS"/>
    <property type="match status" value="1"/>
</dbReference>
<dbReference type="InterPro" id="IPR008278">
    <property type="entry name" value="4-PPantetheinyl_Trfase_dom"/>
</dbReference>
<dbReference type="InterPro" id="IPR037143">
    <property type="entry name" value="4-PPantetheinyl_Trfase_dom_sf"/>
</dbReference>
<dbReference type="InterPro" id="IPR002582">
    <property type="entry name" value="ACPS"/>
</dbReference>
<dbReference type="InterPro" id="IPR004568">
    <property type="entry name" value="Ppantetheine-prot_Trfase_dom"/>
</dbReference>
<dbReference type="NCBIfam" id="TIGR00516">
    <property type="entry name" value="acpS"/>
    <property type="match status" value="1"/>
</dbReference>
<dbReference type="NCBIfam" id="TIGR00556">
    <property type="entry name" value="pantethn_trn"/>
    <property type="match status" value="1"/>
</dbReference>
<dbReference type="Pfam" id="PF01648">
    <property type="entry name" value="ACPS"/>
    <property type="match status" value="1"/>
</dbReference>
<dbReference type="SUPFAM" id="SSF56214">
    <property type="entry name" value="4'-phosphopantetheinyl transferase"/>
    <property type="match status" value="1"/>
</dbReference>